<comment type="function">
    <text evidence="1">Binds to sialic acid-containing receptors on the cell surface, bringing about the attachment of the virus particle to the cell. This attachment induces virion internalization either through clathrin-dependent endocytosis or through clathrin- and caveolin-independent pathway. Plays a major role in the determination of host range restriction and virulence. Class I viral fusion protein. Responsible for penetration of the virus into the cell cytoplasm by mediating the fusion of the membrane of the endocytosed virus particle with the endosomal membrane. Low pH in endosomes induces an irreversible conformational change in HA2, releasing the fusion hydrophobic peptide. Several trimers are required to form a competent fusion pore.</text>
</comment>
<comment type="subunit">
    <text evidence="1">Homotrimer of disulfide-linked HA1-HA2.</text>
</comment>
<comment type="subcellular location">
    <subcellularLocation>
        <location evidence="1">Virion membrane</location>
        <topology evidence="1">Single-pass type I membrane protein</topology>
    </subcellularLocation>
    <subcellularLocation>
        <location evidence="1">Host apical cell membrane</location>
        <topology evidence="1">Single-pass type I membrane protein</topology>
    </subcellularLocation>
    <text evidence="1">Targeted to the apical plasma membrane in epithelial polarized cells through a signal present in the transmembrane domain. Associated with glycosphingolipid- and cholesterol-enriched detergent-resistant lipid rafts.</text>
</comment>
<comment type="PTM">
    <text evidence="1">Palmitoylated.</text>
</comment>
<comment type="PTM">
    <text evidence="1">In natural infection, inactive HA is matured into HA1 and HA2 outside the cell by one or more trypsin-like, arginine-specific endoprotease secreted by the bronchial epithelial cells. One identified protease that may be involved in this process is secreted in lungs by club cells.</text>
</comment>
<comment type="miscellaneous">
    <text>Major glycoprotein, comprises over 80% of the envelope proteins present in virus particle.</text>
</comment>
<comment type="miscellaneous">
    <text>The extent of infection into host organism is determined by HA. Influenza viruses bud from the apical surface of polarized epithelial cells (e.g. bronchial epithelial cells) into lumen of lungs and are therefore usually pneumotropic. The reason is that HA is cleaved by tryptase clara which is restricted to lungs. However, HAs of H5 and H7 pantropic avian viruses subtypes can be cleaved by furin and subtilisin-type enzymes, allowing the virus to grow in other organs than lungs.</text>
</comment>
<comment type="miscellaneous">
    <text>The influenza A genome consist of 8 RNA segments. Genetic variation of hemagglutinin and/or neuraminidase genes results in the emergence of new influenza strains. The mechanism of variation can be the result of point mutations or the result of genetic reassortment between segments of two different strains.</text>
</comment>
<comment type="similarity">
    <text evidence="1">Belongs to the influenza viruses hemagglutinin family.</text>
</comment>
<gene>
    <name evidence="1" type="primary">HA</name>
</gene>
<proteinExistence type="inferred from homology"/>
<feature type="chain" id="PRO_0000440806" description="Hemagglutinin HA1 chain" evidence="1">
    <location>
        <begin position="1"/>
        <end position="335"/>
    </location>
</feature>
<feature type="chain" id="PRO_0000440807" description="Hemagglutinin HA2 chain" evidence="1">
    <location>
        <begin position="336"/>
        <end position="556"/>
    </location>
</feature>
<feature type="topological domain" description="Extracellular" evidence="1">
    <location>
        <begin position="1"/>
        <end position="520"/>
    </location>
</feature>
<feature type="transmembrane region" description="Helical" evidence="1">
    <location>
        <begin position="521"/>
        <end position="541"/>
    </location>
</feature>
<feature type="topological domain" description="Cytoplasmic" evidence="1">
    <location>
        <begin position="542"/>
        <end position="556"/>
    </location>
</feature>
<feature type="site" description="Cleavage; by host" evidence="1">
    <location>
        <begin position="335"/>
        <end position="336"/>
    </location>
</feature>
<feature type="lipid moiety-binding region" description="S-palmitoyl cysteine; by host" evidence="1">
    <location>
        <position position="546"/>
    </location>
</feature>
<feature type="lipid moiety-binding region" description="S-palmitoyl cysteine; by host" evidence="1">
    <location>
        <position position="553"/>
    </location>
</feature>
<feature type="lipid moiety-binding region" description="S-palmitoyl cysteine; by host" evidence="1">
    <location>
        <position position="556"/>
    </location>
</feature>
<feature type="glycosylation site" description="N-linked (GlcNAc...) asparagine; by host" evidence="1">
    <location>
        <position position="15"/>
    </location>
</feature>
<feature type="glycosylation site" description="N-linked (GlcNAc...) asparagine; by host" evidence="1">
    <location>
        <position position="16"/>
    </location>
</feature>
<feature type="glycosylation site" description="N-linked (GlcNAc...) asparagine; by host" evidence="1">
    <location>
        <position position="28"/>
    </location>
</feature>
<feature type="glycosylation site" description="N-linked (GlcNAc...) asparagine; by host" evidence="1">
    <location>
        <position position="170"/>
    </location>
</feature>
<feature type="glycosylation site" description="N-linked (GlcNAc...) asparagine; by host" evidence="1">
    <location>
        <position position="291"/>
    </location>
</feature>
<feature type="glycosylation site" description="N-linked (GlcNAc...) asparagine; by host" evidence="1">
    <location>
        <position position="489"/>
    </location>
</feature>
<feature type="disulfide bond" description="Interchain (between HA1 and HA2 chains)" evidence="1">
    <location>
        <begin position="9"/>
        <end position="472"/>
    </location>
</feature>
<feature type="disulfide bond" evidence="1">
    <location>
        <begin position="47"/>
        <end position="279"/>
    </location>
</feature>
<feature type="disulfide bond" evidence="1">
    <location>
        <begin position="60"/>
        <end position="72"/>
    </location>
</feature>
<feature type="disulfide bond" evidence="1">
    <location>
        <begin position="95"/>
        <end position="140"/>
    </location>
</feature>
<feature type="disulfide bond" evidence="1">
    <location>
        <begin position="283"/>
        <end position="307"/>
    </location>
</feature>
<feature type="disulfide bond" evidence="1">
    <location>
        <begin position="479"/>
        <end position="483"/>
    </location>
</feature>
<feature type="non-terminal residue">
    <location>
        <position position="1"/>
    </location>
</feature>
<feature type="non-terminal residue">
    <location>
        <position position="556"/>
    </location>
</feature>
<reference key="1">
    <citation type="journal article" date="2002" name="Proc. Natl. Acad. Sci. U.S.A.">
        <title>Emergence of multiple genotypes of H5N1 avian influenza viruses in Hong Kong SAR.</title>
        <authorList>
            <person name="Guan Y."/>
            <person name="Peiris J.S.M."/>
            <person name="Lipatov A.S."/>
            <person name="Ellis T.M."/>
            <person name="Dyrting K.C."/>
            <person name="Krauss S."/>
            <person name="Zhang L.J."/>
            <person name="Webster R.G."/>
            <person name="Shortridge K.F."/>
        </authorList>
    </citation>
    <scope>NUCLEOTIDE SEQUENCE [GENOMIC RNA]</scope>
</reference>
<keyword id="KW-1167">Clathrin- and caveolin-independent endocytosis of virus by host</keyword>
<keyword id="KW-1165">Clathrin-mediated endocytosis of virus by host</keyword>
<keyword id="KW-1015">Disulfide bond</keyword>
<keyword id="KW-1170">Fusion of virus membrane with host endosomal membrane</keyword>
<keyword id="KW-1168">Fusion of virus membrane with host membrane</keyword>
<keyword id="KW-0325">Glycoprotein</keyword>
<keyword id="KW-0348">Hemagglutinin</keyword>
<keyword id="KW-1032">Host cell membrane</keyword>
<keyword id="KW-1043">Host membrane</keyword>
<keyword id="KW-0945">Host-virus interaction</keyword>
<keyword id="KW-0449">Lipoprotein</keyword>
<keyword id="KW-0472">Membrane</keyword>
<keyword id="KW-0564">Palmitate</keyword>
<keyword id="KW-0812">Transmembrane</keyword>
<keyword id="KW-1133">Transmembrane helix</keyword>
<keyword id="KW-1161">Viral attachment to host cell</keyword>
<keyword id="KW-0261">Viral envelope protein</keyword>
<keyword id="KW-1162">Viral penetration into host cytoplasm</keyword>
<keyword id="KW-0946">Virion</keyword>
<keyword id="KW-1164">Virus endocytosis by host</keyword>
<keyword id="KW-1160">Virus entry into host cell</keyword>
<name>HEMA_I01A3</name>
<accession>Q80A22</accession>
<protein>
    <recommendedName>
        <fullName evidence="1">Hemagglutinin</fullName>
    </recommendedName>
    <component>
        <recommendedName>
            <fullName evidence="1">Hemagglutinin HA1 chain</fullName>
        </recommendedName>
    </component>
    <component>
        <recommendedName>
            <fullName evidence="1">Hemagglutinin HA2 chain</fullName>
        </recommendedName>
    </component>
</protein>
<organismHost>
    <name type="scientific">Aves</name>
    <dbReference type="NCBI Taxonomy" id="8782"/>
</organismHost>
<organismHost>
    <name type="scientific">Felis catus</name>
    <name type="common">Cat</name>
    <name type="synonym">Felis silvestris catus</name>
    <dbReference type="NCBI Taxonomy" id="9685"/>
</organismHost>
<organismHost>
    <name type="scientific">Homo sapiens</name>
    <name type="common">Human</name>
    <dbReference type="NCBI Taxonomy" id="9606"/>
</organismHost>
<organismHost>
    <name type="scientific">Panthera pardus</name>
    <name type="common">Leopard</name>
    <name type="synonym">Felis pardus</name>
    <dbReference type="NCBI Taxonomy" id="9691"/>
</organismHost>
<organismHost>
    <name type="scientific">Panthera tigris</name>
    <name type="common">Tiger</name>
    <dbReference type="NCBI Taxonomy" id="9694"/>
</organismHost>
<organismHost>
    <name type="scientific">Sus scrofa</name>
    <name type="common">Pig</name>
    <dbReference type="NCBI Taxonomy" id="9823"/>
</organismHost>
<evidence type="ECO:0000255" key="1">
    <source>
        <dbReference type="HAMAP-Rule" id="MF_04072"/>
    </source>
</evidence>
<sequence>SLVKSDQICIGYHANNSTEQVDTIMEKNVTVTHAQDILEKTHNGKLCDLDGVKPLILRDCSVAGWLLGNPMCDEFINVPEWSYIVEKASPVNDLCYPGDFNDYEELKHLLSRINHFEKIQIIPKSSWSNHEASSGVSSACPYLGKPSFFRNVVWLIKKNSAYPTIKRSYNNTNQEDLLVLWGIHHPNDAAEQTKLYQNPTTYISVGTSTLNQRLVPKIATRSKVNGQSGRMEFFWTILKPNDAINFESNGNFIAPEYAYKIVKKGDSAIMKSELEYGNCNTKCQTPMGAINSSMPFHNIHPLTIGECPKYVKSNRLVLATGLRNTPQRERRRKKRGLFGAIAGFIEGGWQGMVDGWYGYHHSNEQGSGYAADKESTQKAINGVTNKVNSIIDKMNTQFEAVGREFNNLERRIENLNKKMEDGFLDVWTYNAELLVLMENERTLDFHDSNVKNLYDKVRLQLRDNAKELGNGCFEFYHKCDNECMESVKNGTYDYPQYSEEARLNREEISGVKLESMGTYQILSIYSTVASSLALAIMVAGLSLWMCSNGSLQCRIC</sequence>
<dbReference type="EMBL" id="AF509025">
    <property type="protein sequence ID" value="AAO52868.1"/>
    <property type="molecule type" value="Genomic_DNA"/>
</dbReference>
<dbReference type="SMR" id="Q80A22"/>
<dbReference type="GlyCosmos" id="Q80A22">
    <property type="glycosylation" value="6 sites, No reported glycans"/>
</dbReference>
<dbReference type="GO" id="GO:0020002">
    <property type="term" value="C:host cell plasma membrane"/>
    <property type="evidence" value="ECO:0007669"/>
    <property type="project" value="UniProtKB-SubCell"/>
</dbReference>
<dbReference type="GO" id="GO:0016020">
    <property type="term" value="C:membrane"/>
    <property type="evidence" value="ECO:0007669"/>
    <property type="project" value="UniProtKB-KW"/>
</dbReference>
<dbReference type="GO" id="GO:0019031">
    <property type="term" value="C:viral envelope"/>
    <property type="evidence" value="ECO:0007669"/>
    <property type="project" value="UniProtKB-KW"/>
</dbReference>
<dbReference type="GO" id="GO:0055036">
    <property type="term" value="C:virion membrane"/>
    <property type="evidence" value="ECO:0007669"/>
    <property type="project" value="UniProtKB-SubCell"/>
</dbReference>
<dbReference type="GO" id="GO:0046789">
    <property type="term" value="F:host cell surface receptor binding"/>
    <property type="evidence" value="ECO:0007669"/>
    <property type="project" value="InterPro"/>
</dbReference>
<dbReference type="GO" id="GO:0075512">
    <property type="term" value="P:clathrin-dependent endocytosis of virus by host cell"/>
    <property type="evidence" value="ECO:0007669"/>
    <property type="project" value="UniProtKB-KW"/>
</dbReference>
<dbReference type="GO" id="GO:0039654">
    <property type="term" value="P:fusion of virus membrane with host endosome membrane"/>
    <property type="evidence" value="ECO:0007669"/>
    <property type="project" value="UniProtKB-KW"/>
</dbReference>
<dbReference type="GO" id="GO:0019064">
    <property type="term" value="P:fusion of virus membrane with host plasma membrane"/>
    <property type="evidence" value="ECO:0007669"/>
    <property type="project" value="InterPro"/>
</dbReference>
<dbReference type="GO" id="GO:0019062">
    <property type="term" value="P:virion attachment to host cell"/>
    <property type="evidence" value="ECO:0007669"/>
    <property type="project" value="UniProtKB-KW"/>
</dbReference>
<dbReference type="FunFam" id="3.90.209.20:FF:000001">
    <property type="entry name" value="Hemagglutinin"/>
    <property type="match status" value="1"/>
</dbReference>
<dbReference type="Gene3D" id="3.90.20.10">
    <property type="match status" value="1"/>
</dbReference>
<dbReference type="Gene3D" id="3.90.209.20">
    <property type="match status" value="1"/>
</dbReference>
<dbReference type="Gene3D" id="2.10.77.10">
    <property type="entry name" value="Hemagglutinin Chain A, Domain 2"/>
    <property type="match status" value="1"/>
</dbReference>
<dbReference type="HAMAP" id="MF_04072">
    <property type="entry name" value="INFV_HEMA"/>
    <property type="match status" value="1"/>
</dbReference>
<dbReference type="InterPro" id="IPR008980">
    <property type="entry name" value="Capsid_hemagglutn"/>
</dbReference>
<dbReference type="InterPro" id="IPR013828">
    <property type="entry name" value="Hemagglutn_HA1_a/b_dom_sf"/>
</dbReference>
<dbReference type="InterPro" id="IPR000149">
    <property type="entry name" value="Hemagglutn_influenz_A"/>
</dbReference>
<dbReference type="InterPro" id="IPR001364">
    <property type="entry name" value="Hemagglutn_influenz_A/B"/>
</dbReference>
<dbReference type="Pfam" id="PF00509">
    <property type="entry name" value="Hemagglutinin"/>
    <property type="match status" value="1"/>
</dbReference>
<dbReference type="PRINTS" id="PR00330">
    <property type="entry name" value="HEMAGGLUTN1"/>
</dbReference>
<dbReference type="PRINTS" id="PR00329">
    <property type="entry name" value="HEMAGGLUTN12"/>
</dbReference>
<dbReference type="SUPFAM" id="SSF58064">
    <property type="entry name" value="Influenza hemagglutinin (stalk)"/>
    <property type="match status" value="1"/>
</dbReference>
<dbReference type="SUPFAM" id="SSF49818">
    <property type="entry name" value="Viral protein domain"/>
    <property type="match status" value="1"/>
</dbReference>
<organism>
    <name type="scientific">Influenza A virus (strain A/Chicken/Hong Kong/715.5/2001 H5N1 genotype E)</name>
    <dbReference type="NCBI Taxonomy" id="196434"/>
    <lineage>
        <taxon>Viruses</taxon>
        <taxon>Riboviria</taxon>
        <taxon>Orthornavirae</taxon>
        <taxon>Negarnaviricota</taxon>
        <taxon>Polyploviricotina</taxon>
        <taxon>Insthoviricetes</taxon>
        <taxon>Articulavirales</taxon>
        <taxon>Orthomyxoviridae</taxon>
        <taxon>Alphainfluenzavirus</taxon>
        <taxon>Alphainfluenzavirus influenzae</taxon>
        <taxon>Influenza A virus</taxon>
    </lineage>
</organism>